<accession>Q6S8J7</accession>
<accession>A6ND17</accession>
<accession>A6ND71</accession>
<accession>Q6S8J6</accession>
<dbReference type="EMBL" id="AY462869">
    <property type="protein sequence ID" value="AAS58863.1"/>
    <property type="molecule type" value="mRNA"/>
</dbReference>
<dbReference type="EMBL" id="AY462870">
    <property type="protein sequence ID" value="AAS58864.1"/>
    <property type="molecule type" value="mRNA"/>
</dbReference>
<dbReference type="EMBL" id="AC022616">
    <property type="status" value="NOT_ANNOTATED_CDS"/>
    <property type="molecule type" value="Genomic_DNA"/>
</dbReference>
<dbReference type="RefSeq" id="NP_001002920.1">
    <molecule id="Q6S8J7-2"/>
    <property type="nucleotide sequence ID" value="NM_001002920.1"/>
</dbReference>
<dbReference type="RefSeq" id="NP_001005365.2">
    <molecule id="Q6S8J7-1"/>
    <property type="nucleotide sequence ID" value="NM_001005365.2"/>
</dbReference>
<dbReference type="SMR" id="Q6S8J7"/>
<dbReference type="BioGRID" id="131050">
    <property type="interactions" value="5"/>
</dbReference>
<dbReference type="FunCoup" id="Q6S8J7">
    <property type="interactions" value="1"/>
</dbReference>
<dbReference type="IntAct" id="Q6S8J7">
    <property type="interactions" value="4"/>
</dbReference>
<dbReference type="GlyGen" id="Q6S8J7">
    <property type="glycosylation" value="1 site, 1 O-linked glycan (1 site)"/>
</dbReference>
<dbReference type="iPTMnet" id="Q6S8J7"/>
<dbReference type="PhosphoSitePlus" id="Q6S8J7"/>
<dbReference type="BioMuta" id="POTEA"/>
<dbReference type="DMDM" id="55976446"/>
<dbReference type="MassIVE" id="Q6S8J7"/>
<dbReference type="PeptideAtlas" id="Q6S8J7"/>
<dbReference type="ProteomicsDB" id="67350">
    <molecule id="Q6S8J7-1"/>
</dbReference>
<dbReference type="ProteomicsDB" id="67351">
    <molecule id="Q6S8J7-2"/>
</dbReference>
<dbReference type="DNASU" id="340441"/>
<dbReference type="GeneID" id="340441"/>
<dbReference type="KEGG" id="hsa:340441"/>
<dbReference type="AGR" id="HGNC:33893"/>
<dbReference type="CTD" id="340441"/>
<dbReference type="DisGeNET" id="340441"/>
<dbReference type="GeneCards" id="POTEA"/>
<dbReference type="HGNC" id="HGNC:33893">
    <property type="gene designation" value="POTEA"/>
</dbReference>
<dbReference type="MIM" id="608915">
    <property type="type" value="gene"/>
</dbReference>
<dbReference type="neXtProt" id="NX_Q6S8J7"/>
<dbReference type="PharmGKB" id="PA164724701"/>
<dbReference type="InParanoid" id="Q6S8J7"/>
<dbReference type="OrthoDB" id="6066131at2759"/>
<dbReference type="PAN-GO" id="Q6S8J7">
    <property type="GO annotations" value="0 GO annotations based on evolutionary models"/>
</dbReference>
<dbReference type="PhylomeDB" id="Q6S8J7"/>
<dbReference type="PathwayCommons" id="Q6S8J7"/>
<dbReference type="SignaLink" id="Q6S8J7"/>
<dbReference type="BioGRID-ORCS" id="340441">
    <property type="hits" value="3 hits in 171 CRISPR screens"/>
</dbReference>
<dbReference type="GenomeRNAi" id="340441"/>
<dbReference type="Pharos" id="Q6S8J7">
    <property type="development level" value="Tdark"/>
</dbReference>
<dbReference type="PRO" id="PR:Q6S8J7"/>
<dbReference type="Proteomes" id="UP000005640">
    <property type="component" value="Unplaced"/>
</dbReference>
<dbReference type="RNAct" id="Q6S8J7">
    <property type="molecule type" value="protein"/>
</dbReference>
<dbReference type="Gene3D" id="1.25.40.20">
    <property type="entry name" value="Ankyrin repeat-containing domain"/>
    <property type="match status" value="1"/>
</dbReference>
<dbReference type="InterPro" id="IPR050657">
    <property type="entry name" value="Ankyrin_repeat_domain"/>
</dbReference>
<dbReference type="InterPro" id="IPR002110">
    <property type="entry name" value="Ankyrin_rpt"/>
</dbReference>
<dbReference type="InterPro" id="IPR036770">
    <property type="entry name" value="Ankyrin_rpt-contain_sf"/>
</dbReference>
<dbReference type="PANTHER" id="PTHR24147">
    <property type="entry name" value="ANKYRIN REPEAT DOMAIN 36-RELATED"/>
    <property type="match status" value="1"/>
</dbReference>
<dbReference type="PANTHER" id="PTHR24147:SF68">
    <property type="entry name" value="POTE ANKYRIN DOMAIN FAMILY MEMBER A"/>
    <property type="match status" value="1"/>
</dbReference>
<dbReference type="Pfam" id="PF12796">
    <property type="entry name" value="Ank_2"/>
    <property type="match status" value="2"/>
</dbReference>
<dbReference type="PRINTS" id="PR01415">
    <property type="entry name" value="ANKYRIN"/>
</dbReference>
<dbReference type="SMART" id="SM00248">
    <property type="entry name" value="ANK"/>
    <property type="match status" value="6"/>
</dbReference>
<dbReference type="SUPFAM" id="SSF48403">
    <property type="entry name" value="Ankyrin repeat"/>
    <property type="match status" value="1"/>
</dbReference>
<dbReference type="PROSITE" id="PS50297">
    <property type="entry name" value="ANK_REP_REGION"/>
    <property type="match status" value="1"/>
</dbReference>
<dbReference type="PROSITE" id="PS50088">
    <property type="entry name" value="ANK_REPEAT"/>
    <property type="match status" value="4"/>
</dbReference>
<proteinExistence type="evidence at transcript level"/>
<feature type="chain" id="PRO_0000066915" description="POTE ankyrin domain family member A">
    <location>
        <begin position="1"/>
        <end position="498"/>
    </location>
</feature>
<feature type="repeat" description="ANK 1">
    <location>
        <begin position="98"/>
        <end position="127"/>
    </location>
</feature>
<feature type="repeat" description="ANK 2">
    <location>
        <begin position="131"/>
        <end position="160"/>
    </location>
</feature>
<feature type="repeat" description="ANK 3">
    <location>
        <begin position="164"/>
        <end position="193"/>
    </location>
</feature>
<feature type="repeat" description="ANK 4">
    <location>
        <begin position="197"/>
        <end position="226"/>
    </location>
</feature>
<feature type="repeat" description="ANK 5">
    <location>
        <begin position="230"/>
        <end position="259"/>
    </location>
</feature>
<feature type="region of interest" description="Disordered" evidence="2">
    <location>
        <begin position="289"/>
        <end position="410"/>
    </location>
</feature>
<feature type="coiled-coil region" evidence="1">
    <location>
        <begin position="469"/>
        <end position="497"/>
    </location>
</feature>
<feature type="compositionally biased region" description="Polar residues" evidence="2">
    <location>
        <begin position="290"/>
        <end position="302"/>
    </location>
</feature>
<feature type="compositionally biased region" description="Basic and acidic residues" evidence="2">
    <location>
        <begin position="303"/>
        <end position="338"/>
    </location>
</feature>
<feature type="compositionally biased region" description="Polar residues" evidence="2">
    <location>
        <begin position="348"/>
        <end position="359"/>
    </location>
</feature>
<feature type="compositionally biased region" description="Basic and acidic residues" evidence="2">
    <location>
        <begin position="392"/>
        <end position="406"/>
    </location>
</feature>
<feature type="splice variant" id="VSP_011974" description="In isoform 2." evidence="3">
    <location>
        <begin position="233"/>
        <end position="278"/>
    </location>
</feature>
<evidence type="ECO:0000255" key="1"/>
<evidence type="ECO:0000256" key="2">
    <source>
        <dbReference type="SAM" id="MobiDB-lite"/>
    </source>
</evidence>
<evidence type="ECO:0000303" key="3">
    <source>
    </source>
</evidence>
<evidence type="ECO:0000305" key="4"/>
<keyword id="KW-0025">Alternative splicing</keyword>
<keyword id="KW-0040">ANK repeat</keyword>
<keyword id="KW-0175">Coiled coil</keyword>
<keyword id="KW-1185">Reference proteome</keyword>
<keyword id="KW-0677">Repeat</keyword>
<reference key="1">
    <citation type="journal article" date="2004" name="Gene">
        <title>Five POTE paralogs and their splice variants are expressed in human prostate and encode proteins of different lengths.</title>
        <authorList>
            <person name="Bera T.K."/>
            <person name="Huynh N."/>
            <person name="Maeda H."/>
            <person name="Sathyanarayana B.K."/>
            <person name="Lee B."/>
            <person name="Pastan I."/>
        </authorList>
    </citation>
    <scope>NUCLEOTIDE SEQUENCE [MRNA] (ISOFORMS 1 AND 2)</scope>
    <source>
        <tissue>Prostate</tissue>
    </source>
</reference>
<reference key="2">
    <citation type="journal article" date="2006" name="Nature">
        <title>DNA sequence and analysis of human chromosome 8.</title>
        <authorList>
            <person name="Nusbaum C."/>
            <person name="Mikkelsen T.S."/>
            <person name="Zody M.C."/>
            <person name="Asakawa S."/>
            <person name="Taudien S."/>
            <person name="Garber M."/>
            <person name="Kodira C.D."/>
            <person name="Schueler M.G."/>
            <person name="Shimizu A."/>
            <person name="Whittaker C.A."/>
            <person name="Chang J.L."/>
            <person name="Cuomo C.A."/>
            <person name="Dewar K."/>
            <person name="FitzGerald M.G."/>
            <person name="Yang X."/>
            <person name="Allen N.R."/>
            <person name="Anderson S."/>
            <person name="Asakawa T."/>
            <person name="Blechschmidt K."/>
            <person name="Bloom T."/>
            <person name="Borowsky M.L."/>
            <person name="Butler J."/>
            <person name="Cook A."/>
            <person name="Corum B."/>
            <person name="DeArellano K."/>
            <person name="DeCaprio D."/>
            <person name="Dooley K.T."/>
            <person name="Dorris L. III"/>
            <person name="Engels R."/>
            <person name="Gloeckner G."/>
            <person name="Hafez N."/>
            <person name="Hagopian D.S."/>
            <person name="Hall J.L."/>
            <person name="Ishikawa S.K."/>
            <person name="Jaffe D.B."/>
            <person name="Kamat A."/>
            <person name="Kudoh J."/>
            <person name="Lehmann R."/>
            <person name="Lokitsang T."/>
            <person name="Macdonald P."/>
            <person name="Major J.E."/>
            <person name="Matthews C.D."/>
            <person name="Mauceli E."/>
            <person name="Menzel U."/>
            <person name="Mihalev A.H."/>
            <person name="Minoshima S."/>
            <person name="Murayama Y."/>
            <person name="Naylor J.W."/>
            <person name="Nicol R."/>
            <person name="Nguyen C."/>
            <person name="O'Leary S.B."/>
            <person name="O'Neill K."/>
            <person name="Parker S.C.J."/>
            <person name="Polley A."/>
            <person name="Raymond C.K."/>
            <person name="Reichwald K."/>
            <person name="Rodriguez J."/>
            <person name="Sasaki T."/>
            <person name="Schilhabel M."/>
            <person name="Siddiqui R."/>
            <person name="Smith C.L."/>
            <person name="Sneddon T.P."/>
            <person name="Talamas J.A."/>
            <person name="Tenzin P."/>
            <person name="Topham K."/>
            <person name="Venkataraman V."/>
            <person name="Wen G."/>
            <person name="Yamazaki S."/>
            <person name="Young S.K."/>
            <person name="Zeng Q."/>
            <person name="Zimmer A.R."/>
            <person name="Rosenthal A."/>
            <person name="Birren B.W."/>
            <person name="Platzer M."/>
            <person name="Shimizu N."/>
            <person name="Lander E.S."/>
        </authorList>
    </citation>
    <scope>NUCLEOTIDE SEQUENCE [LARGE SCALE GENOMIC DNA]</scope>
</reference>
<gene>
    <name type="primary">POTEA</name>
    <name type="synonym">A26A1</name>
    <name type="synonym">POTE8</name>
</gene>
<comment type="alternative products">
    <event type="alternative splicing"/>
    <isoform>
        <id>Q6S8J7-1</id>
        <name>1</name>
        <name>A</name>
        <sequence type="displayed"/>
    </isoform>
    <isoform>
        <id>Q6S8J7-2</id>
        <name>2</name>
        <name>B</name>
        <sequence type="described" ref="VSP_011974"/>
    </isoform>
</comment>
<comment type="similarity">
    <text evidence="4">Belongs to the POTE family.</text>
</comment>
<name>POTEA_HUMAN</name>
<protein>
    <recommendedName>
        <fullName>POTE ankyrin domain family member A</fullName>
    </recommendedName>
    <alternativeName>
        <fullName>ANKRD26-like family A member 1</fullName>
    </alternativeName>
    <alternativeName>
        <fullName>Prostate, ovary, testis-expressed protein on chromosome 8</fullName>
        <shortName>POTE-8</shortName>
    </alternativeName>
</protein>
<organism>
    <name type="scientific">Homo sapiens</name>
    <name type="common">Human</name>
    <dbReference type="NCBI Taxonomy" id="9606"/>
    <lineage>
        <taxon>Eukaryota</taxon>
        <taxon>Metazoa</taxon>
        <taxon>Chordata</taxon>
        <taxon>Craniata</taxon>
        <taxon>Vertebrata</taxon>
        <taxon>Euteleostomi</taxon>
        <taxon>Mammalia</taxon>
        <taxon>Eutheria</taxon>
        <taxon>Euarchontoglires</taxon>
        <taxon>Primates</taxon>
        <taxon>Haplorrhini</taxon>
        <taxon>Catarrhini</taxon>
        <taxon>Hominidae</taxon>
        <taxon>Homo</taxon>
    </lineage>
</organism>
<sequence length="498" mass="56166">MVAEVSPKLAASPMKKPFGFRGKMGKWCCCCFPCCRGSGKNNMGAWRDHDDSAFTEPRYHVRREDLGKLHRAAWWGEVPRADLIVMLRGPGINKRDKKKRTALHLACANGNSEVVSLLLDRQCQLHVFDSKKRTALIKAVQCQEDECALMLLQHGTDPNLPDMYGNTALHYAVYNEDKLMAKTLLLYGADIESKNKGGLTPLLLAVHGQKQRMVKFLIKKKANLNALDRFGRTALILAVRCGSASIVSLLLQQNIDVFSQDVFGQTAEDYAVSSHHSIICQLLSDYKENQMPNNSSGNSNPEQDLKLTSEEEPQRLKGSENSQHEKVTQEPDINKDCDREVEEEMQKHGSNNVGLSENLTDGAAAGNGDGGLVPQRKSRKHENQQFPNTEIEEYHRPEKKSNEKNKVKSQIHSVDNLDDITWPSEIASEDYDLLFSNYETFTLLIEQLKMDFNDSASLSKIQDAVISEEHLLELKNSHYEQLTVEVEQMENMVHVLQK</sequence>